<proteinExistence type="evidence at protein level"/>
<keyword id="KW-0010">Activator</keyword>
<keyword id="KW-0025">Alternative splicing</keyword>
<keyword id="KW-0238">DNA-binding</keyword>
<keyword id="KW-0539">Nucleus</keyword>
<keyword id="KW-1185">Reference proteome</keyword>
<keyword id="KW-0677">Repeat</keyword>
<keyword id="KW-0678">Repressor</keyword>
<keyword id="KW-0804">Transcription</keyword>
<keyword id="KW-0805">Transcription regulation</keyword>
<sequence length="737" mass="80972">MATPAAVNPSEMGTDLPGPVSMPGAVVGAGQVRMTGAMPGRGGKRRSAGMDFDDEDGEGPSKFSRYDDDQIPGDKERYARENHSEIERRRRNKMTQYITELSDMVPTCSALARKPDKLTILRMAVSHMKSMRGTGNTSTDGAYKPSFLTEQELKHLILEAADGFLFVVAAETGRVIYVSDSVTPVLNHPQSEWFGSTLFEQVHPDDVDKLREQLSTSENSMTGRILDLKTGTVKKEGQQSSMRMCMGSRRSFICRMRCGSAPLDHISLNRLSSMRKRYRNGLGPSKEGEAQYSVVHCTGYIKAWPPAGMTIPDEDTEAGQTSKYCLVAIGRLQVTSSPVSMDMNGLSVPTEFLSRHNSDGIITFVDPRCINVIGYQPQDLLGKDILEFCHPEDQSHLRESFQQVVKLKGQVLSVMYRFRMKNREWMLIRTSSFTFQNPYSDEIEYIICTNTNVKQLQQQQQAELEVHQRDGLTAYDLSQVPVSGVSAGVHESGKTIDKTESLFSQERDPRFSDIYTGISTSEKKMMVPSSTSGGQQLYSQGSPFQPGHSGKSFSSSVIHVPGVNDIQSTAGSAGQNLSQISRQINTGQVSWSGNRPPFSGQQIPAQSNKAQSSPFGIGSSHSYQADPSSYSPLSSPATSSPSGNAYSNLANRNTAFDVSGESSQSGGQFQGRPSEVWSQWQSQHHSQQAGDPHPHTQASQTEVFQDMLPMPGDPTQGTTNYNIEDFADLGMFPPFSE</sequence>
<gene>
    <name evidence="13" type="primary">arnt2</name>
</gene>
<organism>
    <name type="scientific">Danio rerio</name>
    <name type="common">Zebrafish</name>
    <name type="synonym">Brachydanio rerio</name>
    <dbReference type="NCBI Taxonomy" id="7955"/>
    <lineage>
        <taxon>Eukaryota</taxon>
        <taxon>Metazoa</taxon>
        <taxon>Chordata</taxon>
        <taxon>Craniata</taxon>
        <taxon>Vertebrata</taxon>
        <taxon>Euteleostomi</taxon>
        <taxon>Actinopterygii</taxon>
        <taxon>Neopterygii</taxon>
        <taxon>Teleostei</taxon>
        <taxon>Ostariophysi</taxon>
        <taxon>Cypriniformes</taxon>
        <taxon>Danionidae</taxon>
        <taxon>Danioninae</taxon>
        <taxon>Danio</taxon>
    </lineage>
</organism>
<protein>
    <recommendedName>
        <fullName>Aryl hydrocarbon receptor nuclear translocator 2</fullName>
        <shortName>ARNT protein 2</shortName>
        <shortName>zfARNT2</shortName>
    </recommendedName>
</protein>
<evidence type="ECO:0000250" key="1">
    <source>
        <dbReference type="UniProtKB" id="Q9HBZ2"/>
    </source>
</evidence>
<evidence type="ECO:0000255" key="2"/>
<evidence type="ECO:0000255" key="3">
    <source>
        <dbReference type="PROSITE-ProRule" id="PRU00140"/>
    </source>
</evidence>
<evidence type="ECO:0000255" key="4">
    <source>
        <dbReference type="PROSITE-ProRule" id="PRU00981"/>
    </source>
</evidence>
<evidence type="ECO:0000256" key="5">
    <source>
        <dbReference type="SAM" id="MobiDB-lite"/>
    </source>
</evidence>
<evidence type="ECO:0000269" key="6">
    <source>
    </source>
</evidence>
<evidence type="ECO:0000269" key="7">
    <source>
    </source>
</evidence>
<evidence type="ECO:0000303" key="8">
    <source>
    </source>
</evidence>
<evidence type="ECO:0000303" key="9">
    <source>
    </source>
</evidence>
<evidence type="ECO:0000305" key="10"/>
<evidence type="ECO:0000312" key="11">
    <source>
        <dbReference type="EMBL" id="AAF73280.1"/>
    </source>
</evidence>
<evidence type="ECO:0000312" key="12">
    <source>
        <dbReference type="EMBL" id="AAG25920.1"/>
    </source>
</evidence>
<evidence type="ECO:0000312" key="13">
    <source>
        <dbReference type="ZFIN" id="ZDB-GENE-001207-3"/>
    </source>
</evidence>
<accession>Q9DG12</accession>
<accession>Q9DG11</accession>
<accession>Q9DG13</accession>
<accession>Q9IAS2</accession>
<name>ARNT2_DANRE</name>
<dbReference type="EMBL" id="AF219987">
    <property type="protein sequence ID" value="AAG25919.1"/>
    <property type="molecule type" value="mRNA"/>
</dbReference>
<dbReference type="EMBL" id="AF219988">
    <property type="protein sequence ID" value="AAG25920.1"/>
    <property type="molecule type" value="mRNA"/>
</dbReference>
<dbReference type="EMBL" id="AF219989">
    <property type="protein sequence ID" value="AAG25921.1"/>
    <property type="molecule type" value="mRNA"/>
</dbReference>
<dbReference type="EMBL" id="AF155066">
    <property type="protein sequence ID" value="AAF73280.1"/>
    <property type="molecule type" value="mRNA"/>
</dbReference>
<dbReference type="RefSeq" id="NP_571749.1">
    <property type="nucleotide sequence ID" value="NM_131674.1"/>
</dbReference>
<dbReference type="SMR" id="Q9DG12"/>
<dbReference type="FunCoup" id="Q9DG12">
    <property type="interactions" value="2205"/>
</dbReference>
<dbReference type="STRING" id="7955.ENSDARP00000136894"/>
<dbReference type="PaxDb" id="7955-ENSDARP00000110276"/>
<dbReference type="GeneID" id="64277"/>
<dbReference type="KEGG" id="dre:64277"/>
<dbReference type="AGR" id="ZFIN:ZDB-GENE-001207-3"/>
<dbReference type="CTD" id="9915"/>
<dbReference type="ZFIN" id="ZDB-GENE-001207-3">
    <property type="gene designation" value="arnt2"/>
</dbReference>
<dbReference type="eggNOG" id="KOG3561">
    <property type="taxonomic scope" value="Eukaryota"/>
</dbReference>
<dbReference type="InParanoid" id="Q9DG12"/>
<dbReference type="OrthoDB" id="71302at2759"/>
<dbReference type="PhylomeDB" id="Q9DG12"/>
<dbReference type="Reactome" id="R-DRE-211945">
    <property type="pathway name" value="Phase I - Functionalization of compounds"/>
</dbReference>
<dbReference type="Reactome" id="R-DRE-211976">
    <property type="pathway name" value="Endogenous sterols"/>
</dbReference>
<dbReference type="Reactome" id="R-DRE-211981">
    <property type="pathway name" value="Xenobiotics"/>
</dbReference>
<dbReference type="Reactome" id="R-DRE-8937144">
    <property type="pathway name" value="Aryl hydrocarbon receptor signalling"/>
</dbReference>
<dbReference type="Reactome" id="R-DRE-9768919">
    <property type="pathway name" value="NPAS4 regulates expression of target genes"/>
</dbReference>
<dbReference type="PRO" id="PR:Q9DG12"/>
<dbReference type="Proteomes" id="UP000000437">
    <property type="component" value="Chromosome 7"/>
</dbReference>
<dbReference type="GO" id="GO:0034751">
    <property type="term" value="C:aryl hydrocarbon receptor complex"/>
    <property type="evidence" value="ECO:0000318"/>
    <property type="project" value="GO_Central"/>
</dbReference>
<dbReference type="GO" id="GO:0005737">
    <property type="term" value="C:cytoplasm"/>
    <property type="evidence" value="ECO:0007669"/>
    <property type="project" value="InterPro"/>
</dbReference>
<dbReference type="GO" id="GO:0005634">
    <property type="term" value="C:nucleus"/>
    <property type="evidence" value="ECO:0000318"/>
    <property type="project" value="GO_Central"/>
</dbReference>
<dbReference type="GO" id="GO:0005667">
    <property type="term" value="C:transcription regulator complex"/>
    <property type="evidence" value="ECO:0007669"/>
    <property type="project" value="InterPro"/>
</dbReference>
<dbReference type="GO" id="GO:0003700">
    <property type="term" value="F:DNA-binding transcription factor activity"/>
    <property type="evidence" value="ECO:0000314"/>
    <property type="project" value="UniProtKB"/>
</dbReference>
<dbReference type="GO" id="GO:0000981">
    <property type="term" value="F:DNA-binding transcription factor activity, RNA polymerase II-specific"/>
    <property type="evidence" value="ECO:0000318"/>
    <property type="project" value="GO_Central"/>
</dbReference>
<dbReference type="GO" id="GO:0046982">
    <property type="term" value="F:protein heterodimerization activity"/>
    <property type="evidence" value="ECO:0000303"/>
    <property type="project" value="UniProtKB"/>
</dbReference>
<dbReference type="GO" id="GO:0000978">
    <property type="term" value="F:RNA polymerase II cis-regulatory region sequence-specific DNA binding"/>
    <property type="evidence" value="ECO:0000318"/>
    <property type="project" value="GO_Central"/>
</dbReference>
<dbReference type="GO" id="GO:0007411">
    <property type="term" value="P:axon guidance"/>
    <property type="evidence" value="ECO:0000315"/>
    <property type="project" value="ZFIN"/>
</dbReference>
<dbReference type="GO" id="GO:0007420">
    <property type="term" value="P:brain development"/>
    <property type="evidence" value="ECO:0000250"/>
    <property type="project" value="UniProtKB"/>
</dbReference>
<dbReference type="GO" id="GO:0003208">
    <property type="term" value="P:cardiac ventricle morphogenesis"/>
    <property type="evidence" value="ECO:0000315"/>
    <property type="project" value="ZFIN"/>
</dbReference>
<dbReference type="GO" id="GO:0098609">
    <property type="term" value="P:cell-cell adhesion"/>
    <property type="evidence" value="ECO:0000315"/>
    <property type="project" value="ZFIN"/>
</dbReference>
<dbReference type="GO" id="GO:0021536">
    <property type="term" value="P:diencephalon development"/>
    <property type="evidence" value="ECO:0000315"/>
    <property type="project" value="ZFIN"/>
</dbReference>
<dbReference type="GO" id="GO:0071542">
    <property type="term" value="P:dopaminergic neuron differentiation"/>
    <property type="evidence" value="ECO:0000315"/>
    <property type="project" value="ZFIN"/>
</dbReference>
<dbReference type="GO" id="GO:0021979">
    <property type="term" value="P:hypothalamus cell differentiation"/>
    <property type="evidence" value="ECO:0000315"/>
    <property type="project" value="ZFIN"/>
</dbReference>
<dbReference type="GO" id="GO:0072576">
    <property type="term" value="P:liver morphogenesis"/>
    <property type="evidence" value="ECO:0000315"/>
    <property type="project" value="ZFIN"/>
</dbReference>
<dbReference type="GO" id="GO:0045893">
    <property type="term" value="P:positive regulation of DNA-templated transcription"/>
    <property type="evidence" value="ECO:0000353"/>
    <property type="project" value="ZFIN"/>
</dbReference>
<dbReference type="GO" id="GO:0006355">
    <property type="term" value="P:regulation of DNA-templated transcription"/>
    <property type="evidence" value="ECO:0000314"/>
    <property type="project" value="UniProtKB"/>
</dbReference>
<dbReference type="GO" id="GO:0006357">
    <property type="term" value="P:regulation of transcription by RNA polymerase II"/>
    <property type="evidence" value="ECO:0000318"/>
    <property type="project" value="GO_Central"/>
</dbReference>
<dbReference type="GO" id="GO:0001666">
    <property type="term" value="P:response to hypoxia"/>
    <property type="evidence" value="ECO:0000314"/>
    <property type="project" value="UniProtKB"/>
</dbReference>
<dbReference type="GO" id="GO:0007165">
    <property type="term" value="P:signal transduction"/>
    <property type="evidence" value="ECO:0000314"/>
    <property type="project" value="UniProtKB"/>
</dbReference>
<dbReference type="GO" id="GO:0048798">
    <property type="term" value="P:swim bladder inflation"/>
    <property type="evidence" value="ECO:0000315"/>
    <property type="project" value="ZFIN"/>
</dbReference>
<dbReference type="GO" id="GO:0021591">
    <property type="term" value="P:ventricular system development"/>
    <property type="evidence" value="ECO:0000315"/>
    <property type="project" value="ZFIN"/>
</dbReference>
<dbReference type="CDD" id="cd18947">
    <property type="entry name" value="bHLH-PAS_ARNT"/>
    <property type="match status" value="1"/>
</dbReference>
<dbReference type="CDD" id="cd00130">
    <property type="entry name" value="PAS"/>
    <property type="match status" value="2"/>
</dbReference>
<dbReference type="FunFam" id="3.30.450.20:FF:000003">
    <property type="entry name" value="Aryl hydrocarbon receptor nuclear translocator 2"/>
    <property type="match status" value="1"/>
</dbReference>
<dbReference type="FunFam" id="3.30.450.20:FF:000020">
    <property type="entry name" value="Aryl hydrocarbon receptor nuclear translocator 2"/>
    <property type="match status" value="1"/>
</dbReference>
<dbReference type="FunFam" id="4.10.280.10:FF:000011">
    <property type="entry name" value="Aryl hydrocarbon receptor nuclear translocator 2"/>
    <property type="match status" value="1"/>
</dbReference>
<dbReference type="Gene3D" id="4.10.280.10">
    <property type="entry name" value="Helix-loop-helix DNA-binding domain"/>
    <property type="match status" value="1"/>
</dbReference>
<dbReference type="Gene3D" id="3.30.450.20">
    <property type="entry name" value="PAS domain"/>
    <property type="match status" value="2"/>
</dbReference>
<dbReference type="InterPro" id="IPR011598">
    <property type="entry name" value="bHLH_dom"/>
</dbReference>
<dbReference type="InterPro" id="IPR050933">
    <property type="entry name" value="Circadian_TF"/>
</dbReference>
<dbReference type="InterPro" id="IPR036638">
    <property type="entry name" value="HLH_DNA-bd_sf"/>
</dbReference>
<dbReference type="InterPro" id="IPR001067">
    <property type="entry name" value="Nuc_translocat"/>
</dbReference>
<dbReference type="InterPro" id="IPR001610">
    <property type="entry name" value="PAC"/>
</dbReference>
<dbReference type="InterPro" id="IPR000014">
    <property type="entry name" value="PAS"/>
</dbReference>
<dbReference type="InterPro" id="IPR035965">
    <property type="entry name" value="PAS-like_dom_sf"/>
</dbReference>
<dbReference type="InterPro" id="IPR013767">
    <property type="entry name" value="PAS_fold"/>
</dbReference>
<dbReference type="NCBIfam" id="TIGR00229">
    <property type="entry name" value="sensory_box"/>
    <property type="match status" value="1"/>
</dbReference>
<dbReference type="PANTHER" id="PTHR23042">
    <property type="entry name" value="CIRCADIAN PROTEIN CLOCK/ARNT/BMAL/PAS"/>
    <property type="match status" value="1"/>
</dbReference>
<dbReference type="Pfam" id="PF00010">
    <property type="entry name" value="HLH"/>
    <property type="match status" value="1"/>
</dbReference>
<dbReference type="Pfam" id="PF00989">
    <property type="entry name" value="PAS"/>
    <property type="match status" value="1"/>
</dbReference>
<dbReference type="Pfam" id="PF14598">
    <property type="entry name" value="PAS_11"/>
    <property type="match status" value="1"/>
</dbReference>
<dbReference type="PRINTS" id="PR00785">
    <property type="entry name" value="NCTRNSLOCATR"/>
</dbReference>
<dbReference type="SMART" id="SM00353">
    <property type="entry name" value="HLH"/>
    <property type="match status" value="1"/>
</dbReference>
<dbReference type="SMART" id="SM00086">
    <property type="entry name" value="PAC"/>
    <property type="match status" value="1"/>
</dbReference>
<dbReference type="SMART" id="SM00091">
    <property type="entry name" value="PAS"/>
    <property type="match status" value="2"/>
</dbReference>
<dbReference type="SUPFAM" id="SSF47459">
    <property type="entry name" value="HLH, helix-loop-helix DNA-binding domain"/>
    <property type="match status" value="1"/>
</dbReference>
<dbReference type="SUPFAM" id="SSF55785">
    <property type="entry name" value="PYP-like sensor domain (PAS domain)"/>
    <property type="match status" value="2"/>
</dbReference>
<dbReference type="PROSITE" id="PS50888">
    <property type="entry name" value="BHLH"/>
    <property type="match status" value="1"/>
</dbReference>
<dbReference type="PROSITE" id="PS50112">
    <property type="entry name" value="PAS"/>
    <property type="match status" value="2"/>
</dbReference>
<reference evidence="10 12" key="1">
    <citation type="journal article" date="2000" name="Biochim. Biophys. Acta">
        <title>Identification and expression of alternatively spliced aryl hydrocarbon nuclear translocator 2 (ARNT2) cDNAs from zebrafish with distinct functions.</title>
        <authorList>
            <person name="Tanguay R.L."/>
            <person name="Andreasen E."/>
            <person name="Heideman W."/>
            <person name="Peterson R.E."/>
        </authorList>
    </citation>
    <scope>NUCLEOTIDE SEQUENCE [MRNA] (ISOFORMS 1; 2 AND 3)</scope>
    <scope>FUNCTION</scope>
    <scope>INTERACTION WITH AHR AND HIF2A</scope>
    <scope>TISSUE SPECIFICITY</scope>
    <source>
        <tissue evidence="7">Liver</tissue>
    </source>
</reference>
<reference evidence="10 11" key="2">
    <citation type="journal article" date="2000" name="Mar. Biotechnol.">
        <title>Overexpression of a zebrafish ARNT2-like factor represses CYP1A transcription in ZLE cells.</title>
        <authorList>
            <person name="Wang W.-D."/>
            <person name="Wu J.-C."/>
            <person name="Hsu H.-J."/>
            <person name="Kong Z.-L."/>
            <person name="Hu C.-H."/>
        </authorList>
    </citation>
    <scope>NUCLEOTIDE SEQUENCE [MRNA] (ISOFORM 3)</scope>
    <scope>FUNCTION</scope>
    <scope>TISSUE SPECIFICITY</scope>
    <source>
        <tissue evidence="6">Embryo</tissue>
    </source>
</reference>
<feature type="chain" id="PRO_0000239938" description="Aryl hydrocarbon receptor nuclear translocator 2">
    <location>
        <begin position="1"/>
        <end position="737"/>
    </location>
</feature>
<feature type="domain" description="bHLH" evidence="4">
    <location>
        <begin position="78"/>
        <end position="131"/>
    </location>
</feature>
<feature type="domain" description="PAS 1" evidence="3">
    <location>
        <begin position="149"/>
        <end position="221"/>
    </location>
</feature>
<feature type="domain" description="PAS 2" evidence="3">
    <location>
        <begin position="340"/>
        <end position="406"/>
    </location>
</feature>
<feature type="domain" description="PAC" evidence="2">
    <location>
        <begin position="413"/>
        <end position="456"/>
    </location>
</feature>
<feature type="region of interest" description="Disordered" evidence="5">
    <location>
        <begin position="1"/>
        <end position="73"/>
    </location>
</feature>
<feature type="region of interest" description="Disordered" evidence="5">
    <location>
        <begin position="525"/>
        <end position="556"/>
    </location>
</feature>
<feature type="region of interest" description="Disordered" evidence="5">
    <location>
        <begin position="588"/>
        <end position="721"/>
    </location>
</feature>
<feature type="compositionally biased region" description="Basic and acidic residues" evidence="5">
    <location>
        <begin position="64"/>
        <end position="73"/>
    </location>
</feature>
<feature type="compositionally biased region" description="Polar residues" evidence="5">
    <location>
        <begin position="528"/>
        <end position="543"/>
    </location>
</feature>
<feature type="compositionally biased region" description="Polar residues" evidence="5">
    <location>
        <begin position="588"/>
        <end position="626"/>
    </location>
</feature>
<feature type="compositionally biased region" description="Low complexity" evidence="5">
    <location>
        <begin position="627"/>
        <end position="642"/>
    </location>
</feature>
<feature type="compositionally biased region" description="Polar residues" evidence="5">
    <location>
        <begin position="643"/>
        <end position="656"/>
    </location>
</feature>
<feature type="compositionally biased region" description="Low complexity" evidence="5">
    <location>
        <begin position="659"/>
        <end position="688"/>
    </location>
</feature>
<feature type="splice variant" id="VSP_052058" description="In isoform 2." evidence="9">
    <location>
        <begin position="66"/>
        <end position="80"/>
    </location>
</feature>
<feature type="splice variant" id="VSP_052059" description="In isoform 3." evidence="8 9">
    <original>VKLKGQVLSVMYRFRMKNREW</original>
    <variation>RQNQIKPVSQHQSHISHMMFF</variation>
    <location>
        <begin position="405"/>
        <end position="425"/>
    </location>
</feature>
<feature type="splice variant" id="VSP_052060" description="In isoform 3." evidence="8 9">
    <location>
        <begin position="426"/>
        <end position="737"/>
    </location>
</feature>
<feature type="sequence conflict" description="In Ref. 1; AAG25920." evidence="10" ref="1">
    <original>T</original>
    <variation>A</variation>
    <location>
        <position position="137"/>
    </location>
</feature>
<feature type="sequence conflict" description="In Ref. 1; AAG25920." evidence="10" ref="1">
    <original>I</original>
    <variation>T</variation>
    <location>
        <position position="370"/>
    </location>
</feature>
<feature type="sequence conflict" description="In Ref. 2; AAF73280." evidence="10" ref="2">
    <original>D</original>
    <variation>V</variation>
    <location>
        <position position="379"/>
    </location>
</feature>
<feature type="sequence conflict" description="In Ref. 1; AAG25921." evidence="10" ref="1">
    <original>P</original>
    <variation>S</variation>
    <location>
        <position position="438"/>
    </location>
</feature>
<feature type="sequence conflict" description="In Ref. 1; AAG25921." evidence="10" ref="1">
    <original>T</original>
    <variation>S</variation>
    <location>
        <position position="495"/>
    </location>
</feature>
<feature type="sequence conflict" description="In Ref. 1; AAG25921." evidence="10" ref="1">
    <original>A</original>
    <variation>V</variation>
    <location>
        <position position="625"/>
    </location>
</feature>
<comment type="function">
    <text evidence="1 6 7">Transcription factor that plays a role in the development of the hypothalamo-pituitary axis. Specifically recognizes the xenobiotic response element (XRE) (By similarity). Isoform 1 acts as a transcriptional activator (PubMed:11072074). Isoform 3 acts as a transcriptional repressor (PubMed:10960127, PubMed:11072074).</text>
</comment>
<comment type="subunit">
    <text evidence="1 7">Efficient DNA binding requires dimerization with another bHLH protein. Heterodimer with the aryl hydrocarbon receptor (AHR), SIM1 or HIF2A/EPAS-1.</text>
</comment>
<comment type="subcellular location">
    <subcellularLocation>
        <location evidence="10">Nucleus</location>
    </subcellularLocation>
</comment>
<comment type="alternative products">
    <event type="alternative splicing"/>
    <isoform>
        <id>Q9DG12-1</id>
        <name evidence="7">1</name>
        <name evidence="7">2b</name>
        <sequence type="displayed"/>
    </isoform>
    <isoform>
        <id>Q9DG12-2</id>
        <name evidence="7">2</name>
        <name evidence="7">2c</name>
        <sequence type="described" ref="VSP_052058"/>
    </isoform>
    <isoform>
        <id>Q9DG12-3</id>
        <name evidence="6 7">3</name>
        <name evidence="6 7">2a</name>
        <sequence type="described" ref="VSP_052059 VSP_052060"/>
    </isoform>
</comment>
<comment type="tissue specificity">
    <text evidence="6 7">Isoform 1 and isoform 2 are most highly expressed in the brain, eye and skeletal muscle and to a lower degree in liver, heart, kidney and swim bladder. Isoform 3 is most highly expressed in the eye, forebrain, midbrain, hindbrain, skeletal muscle, gills and brain but is barely detectable in liver, heart, kidney and swim bladder. Before the pharyngula period isoform 3 is expressed throughout the entire embryo and during this period extensively in the brain and eye.</text>
</comment>